<gene>
    <name evidence="1" type="primary">uvrB</name>
    <name type="ordered locus">SbBS512_E2573</name>
</gene>
<comment type="function">
    <text evidence="1">The UvrABC repair system catalyzes the recognition and processing of DNA lesions. A damage recognition complex composed of 2 UvrA and 2 UvrB subunits scans DNA for abnormalities. Upon binding of the UvrA(2)B(2) complex to a putative damaged site, the DNA wraps around one UvrB monomer. DNA wrap is dependent on ATP binding by UvrB and probably causes local melting of the DNA helix, facilitating insertion of UvrB beta-hairpin between the DNA strands. Then UvrB probes one DNA strand for the presence of a lesion. If a lesion is found the UvrA subunits dissociate and the UvrB-DNA preincision complex is formed. This complex is subsequently bound by UvrC and the second UvrB is released. If no lesion is found, the DNA wraps around the other UvrB subunit that will check the other stand for damage.</text>
</comment>
<comment type="subunit">
    <text evidence="1">Forms a heterotetramer with UvrA during the search for lesions. Interacts with UvrC in an incision complex.</text>
</comment>
<comment type="subcellular location">
    <subcellularLocation>
        <location evidence="1">Cytoplasm</location>
    </subcellularLocation>
</comment>
<comment type="domain">
    <text evidence="1">The beta-hairpin motif is involved in DNA binding.</text>
</comment>
<comment type="similarity">
    <text evidence="1">Belongs to the UvrB family.</text>
</comment>
<protein>
    <recommendedName>
        <fullName evidence="1">UvrABC system protein B</fullName>
        <shortName evidence="1">Protein UvrB</shortName>
    </recommendedName>
    <alternativeName>
        <fullName evidence="1">Excinuclease ABC subunit B</fullName>
    </alternativeName>
</protein>
<evidence type="ECO:0000255" key="1">
    <source>
        <dbReference type="HAMAP-Rule" id="MF_00204"/>
    </source>
</evidence>
<evidence type="ECO:0000256" key="2">
    <source>
        <dbReference type="SAM" id="MobiDB-lite"/>
    </source>
</evidence>
<name>UVRB_SHIB3</name>
<dbReference type="EMBL" id="CP001063">
    <property type="protein sequence ID" value="ACD10397.1"/>
    <property type="molecule type" value="Genomic_DNA"/>
</dbReference>
<dbReference type="RefSeq" id="WP_000042533.1">
    <property type="nucleotide sequence ID" value="NC_010658.1"/>
</dbReference>
<dbReference type="SMR" id="B2TVF1"/>
<dbReference type="STRING" id="344609.SbBS512_E2573"/>
<dbReference type="GeneID" id="93776651"/>
<dbReference type="KEGG" id="sbc:SbBS512_E2573"/>
<dbReference type="HOGENOM" id="CLU_009621_2_1_6"/>
<dbReference type="Proteomes" id="UP000001030">
    <property type="component" value="Chromosome"/>
</dbReference>
<dbReference type="GO" id="GO:0005737">
    <property type="term" value="C:cytoplasm"/>
    <property type="evidence" value="ECO:0007669"/>
    <property type="project" value="UniProtKB-SubCell"/>
</dbReference>
<dbReference type="GO" id="GO:0009380">
    <property type="term" value="C:excinuclease repair complex"/>
    <property type="evidence" value="ECO:0007669"/>
    <property type="project" value="InterPro"/>
</dbReference>
<dbReference type="GO" id="GO:0005524">
    <property type="term" value="F:ATP binding"/>
    <property type="evidence" value="ECO:0007669"/>
    <property type="project" value="UniProtKB-UniRule"/>
</dbReference>
<dbReference type="GO" id="GO:0016887">
    <property type="term" value="F:ATP hydrolysis activity"/>
    <property type="evidence" value="ECO:0007669"/>
    <property type="project" value="InterPro"/>
</dbReference>
<dbReference type="GO" id="GO:0003677">
    <property type="term" value="F:DNA binding"/>
    <property type="evidence" value="ECO:0007669"/>
    <property type="project" value="UniProtKB-UniRule"/>
</dbReference>
<dbReference type="GO" id="GO:0009381">
    <property type="term" value="F:excinuclease ABC activity"/>
    <property type="evidence" value="ECO:0007669"/>
    <property type="project" value="UniProtKB-UniRule"/>
</dbReference>
<dbReference type="GO" id="GO:0004386">
    <property type="term" value="F:helicase activity"/>
    <property type="evidence" value="ECO:0007669"/>
    <property type="project" value="UniProtKB-KW"/>
</dbReference>
<dbReference type="GO" id="GO:0006289">
    <property type="term" value="P:nucleotide-excision repair"/>
    <property type="evidence" value="ECO:0007669"/>
    <property type="project" value="UniProtKB-UniRule"/>
</dbReference>
<dbReference type="GO" id="GO:0009432">
    <property type="term" value="P:SOS response"/>
    <property type="evidence" value="ECO:0007669"/>
    <property type="project" value="UniProtKB-UniRule"/>
</dbReference>
<dbReference type="CDD" id="cd17916">
    <property type="entry name" value="DEXHc_UvrB"/>
    <property type="match status" value="1"/>
</dbReference>
<dbReference type="CDD" id="cd18790">
    <property type="entry name" value="SF2_C_UvrB"/>
    <property type="match status" value="1"/>
</dbReference>
<dbReference type="FunFam" id="3.40.50.300:FF:000257">
    <property type="entry name" value="UvrABC system protein B"/>
    <property type="match status" value="1"/>
</dbReference>
<dbReference type="FunFam" id="3.40.50.300:FF:000401">
    <property type="entry name" value="UvrABC system protein B"/>
    <property type="match status" value="1"/>
</dbReference>
<dbReference type="FunFam" id="3.40.50.300:FF:000477">
    <property type="entry name" value="UvrABC system protein B"/>
    <property type="match status" value="1"/>
</dbReference>
<dbReference type="Gene3D" id="3.40.50.300">
    <property type="entry name" value="P-loop containing nucleotide triphosphate hydrolases"/>
    <property type="match status" value="3"/>
</dbReference>
<dbReference type="Gene3D" id="4.10.860.10">
    <property type="entry name" value="UVR domain"/>
    <property type="match status" value="1"/>
</dbReference>
<dbReference type="HAMAP" id="MF_00204">
    <property type="entry name" value="UvrB"/>
    <property type="match status" value="1"/>
</dbReference>
<dbReference type="InterPro" id="IPR006935">
    <property type="entry name" value="Helicase/UvrB_N"/>
</dbReference>
<dbReference type="InterPro" id="IPR014001">
    <property type="entry name" value="Helicase_ATP-bd"/>
</dbReference>
<dbReference type="InterPro" id="IPR001650">
    <property type="entry name" value="Helicase_C-like"/>
</dbReference>
<dbReference type="InterPro" id="IPR027417">
    <property type="entry name" value="P-loop_NTPase"/>
</dbReference>
<dbReference type="InterPro" id="IPR001943">
    <property type="entry name" value="UVR_dom"/>
</dbReference>
<dbReference type="InterPro" id="IPR036876">
    <property type="entry name" value="UVR_dom_sf"/>
</dbReference>
<dbReference type="InterPro" id="IPR004807">
    <property type="entry name" value="UvrB"/>
</dbReference>
<dbReference type="InterPro" id="IPR041471">
    <property type="entry name" value="UvrB_inter"/>
</dbReference>
<dbReference type="InterPro" id="IPR024759">
    <property type="entry name" value="UvrB_YAD/RRR_dom"/>
</dbReference>
<dbReference type="NCBIfam" id="NF003673">
    <property type="entry name" value="PRK05298.1"/>
    <property type="match status" value="1"/>
</dbReference>
<dbReference type="NCBIfam" id="TIGR00631">
    <property type="entry name" value="uvrb"/>
    <property type="match status" value="1"/>
</dbReference>
<dbReference type="PANTHER" id="PTHR24029">
    <property type="entry name" value="UVRABC SYSTEM PROTEIN B"/>
    <property type="match status" value="1"/>
</dbReference>
<dbReference type="PANTHER" id="PTHR24029:SF0">
    <property type="entry name" value="UVRABC SYSTEM PROTEIN B"/>
    <property type="match status" value="1"/>
</dbReference>
<dbReference type="Pfam" id="PF00271">
    <property type="entry name" value="Helicase_C"/>
    <property type="match status" value="1"/>
</dbReference>
<dbReference type="Pfam" id="PF04851">
    <property type="entry name" value="ResIII"/>
    <property type="match status" value="1"/>
</dbReference>
<dbReference type="Pfam" id="PF02151">
    <property type="entry name" value="UVR"/>
    <property type="match status" value="1"/>
</dbReference>
<dbReference type="Pfam" id="PF12344">
    <property type="entry name" value="UvrB"/>
    <property type="match status" value="1"/>
</dbReference>
<dbReference type="Pfam" id="PF17757">
    <property type="entry name" value="UvrB_inter"/>
    <property type="match status" value="1"/>
</dbReference>
<dbReference type="SMART" id="SM00487">
    <property type="entry name" value="DEXDc"/>
    <property type="match status" value="1"/>
</dbReference>
<dbReference type="SMART" id="SM00490">
    <property type="entry name" value="HELICc"/>
    <property type="match status" value="1"/>
</dbReference>
<dbReference type="SUPFAM" id="SSF46600">
    <property type="entry name" value="C-terminal UvrC-binding domain of UvrB"/>
    <property type="match status" value="1"/>
</dbReference>
<dbReference type="SUPFAM" id="SSF52540">
    <property type="entry name" value="P-loop containing nucleoside triphosphate hydrolases"/>
    <property type="match status" value="2"/>
</dbReference>
<dbReference type="PROSITE" id="PS51192">
    <property type="entry name" value="HELICASE_ATP_BIND_1"/>
    <property type="match status" value="1"/>
</dbReference>
<dbReference type="PROSITE" id="PS51194">
    <property type="entry name" value="HELICASE_CTER"/>
    <property type="match status" value="1"/>
</dbReference>
<dbReference type="PROSITE" id="PS50151">
    <property type="entry name" value="UVR"/>
    <property type="match status" value="1"/>
</dbReference>
<proteinExistence type="inferred from homology"/>
<reference key="1">
    <citation type="submission" date="2008-05" db="EMBL/GenBank/DDBJ databases">
        <title>Complete sequence of Shigella boydii serotype 18 strain BS512.</title>
        <authorList>
            <person name="Rasko D.A."/>
            <person name="Rosovitz M."/>
            <person name="Maurelli A.T."/>
            <person name="Myers G."/>
            <person name="Seshadri R."/>
            <person name="Cer R."/>
            <person name="Jiang L."/>
            <person name="Ravel J."/>
            <person name="Sebastian Y."/>
        </authorList>
    </citation>
    <scope>NUCLEOTIDE SEQUENCE [LARGE SCALE GENOMIC DNA]</scope>
    <source>
        <strain>CDC 3083-94 / BS512</strain>
    </source>
</reference>
<feature type="chain" id="PRO_1000099568" description="UvrABC system protein B">
    <location>
        <begin position="1"/>
        <end position="673"/>
    </location>
</feature>
<feature type="domain" description="Helicase ATP-binding" evidence="1">
    <location>
        <begin position="26"/>
        <end position="183"/>
    </location>
</feature>
<feature type="domain" description="Helicase C-terminal" evidence="1">
    <location>
        <begin position="431"/>
        <end position="597"/>
    </location>
</feature>
<feature type="domain" description="UVR" evidence="1">
    <location>
        <begin position="633"/>
        <end position="668"/>
    </location>
</feature>
<feature type="region of interest" description="Disordered" evidence="2">
    <location>
        <begin position="608"/>
        <end position="627"/>
    </location>
</feature>
<feature type="short sequence motif" description="Beta-hairpin">
    <location>
        <begin position="92"/>
        <end position="115"/>
    </location>
</feature>
<feature type="binding site" evidence="1">
    <location>
        <begin position="39"/>
        <end position="46"/>
    </location>
    <ligand>
        <name>ATP</name>
        <dbReference type="ChEBI" id="CHEBI:30616"/>
    </ligand>
</feature>
<accession>B2TVF1</accession>
<sequence length="673" mass="76226">MSKPFKLNSAFKPSGDQPEAIRRLEEGLEDGLAHQTLLGVTGSGKTFTIANVIADLQRPTMVLAPNKTLAAQLYGEMKEFFPENAVEYFVSYYDYYQPEAYVPSSDTFIEKDASVNEHIEQMRLSATKAMLERRDVVVVASVSAIYGLGDPDLYLKMMLHLTVGMIIDQRAILRRLAELQYARNDQAFQRGTFRVRGEVIDIFPAESDDIALRVELFDEEVERLSLFDPLTGQIVSTIPRFTIYPKTHYVTPRERIVQAMEEIKEELAARRKVLLENNKLLEEQRLTQRTQFDLEMMNELGYCSGIENYSRFLSGRGPGEPPPTLFDYLPADGLLVVDESHVTIPQIGGMYRGDRARKETLVEYGFRLPSALDNRPLKFEEFEALAPQTIYVSATPGNYELEKSGGDVVDQVVRPTGLLDPIIEVRPVATQVDDLLSEIRQRAAINERVLVTTLTKRMAEDLTEYLEEHGERVRYLHSDIDTVERMEIIRDLRLGEFDVLVGINLLREGLDMPEVSLVAILDADKEGFLRSERSLIQTIGRAARNVNGKAILYGDKITPSMAKAIGETERRREKQQKYNEEHGITPQGLNKKVVDILALGQNIAKTKAKGRGKSRPIVEPDNVPMDMSPKALQQKIHELEGLMMQHAQNLEFEEAAQIRDQLHQLRELFIAAS</sequence>
<organism>
    <name type="scientific">Shigella boydii serotype 18 (strain CDC 3083-94 / BS512)</name>
    <dbReference type="NCBI Taxonomy" id="344609"/>
    <lineage>
        <taxon>Bacteria</taxon>
        <taxon>Pseudomonadati</taxon>
        <taxon>Pseudomonadota</taxon>
        <taxon>Gammaproteobacteria</taxon>
        <taxon>Enterobacterales</taxon>
        <taxon>Enterobacteriaceae</taxon>
        <taxon>Shigella</taxon>
    </lineage>
</organism>
<keyword id="KW-0067">ATP-binding</keyword>
<keyword id="KW-0963">Cytoplasm</keyword>
<keyword id="KW-0227">DNA damage</keyword>
<keyword id="KW-0228">DNA excision</keyword>
<keyword id="KW-0234">DNA repair</keyword>
<keyword id="KW-0267">Excision nuclease</keyword>
<keyword id="KW-0347">Helicase</keyword>
<keyword id="KW-0378">Hydrolase</keyword>
<keyword id="KW-0547">Nucleotide-binding</keyword>
<keyword id="KW-1185">Reference proteome</keyword>
<keyword id="KW-0742">SOS response</keyword>